<name>LYTT_OCEIH</name>
<gene>
    <name type="primary">lytT</name>
    <name type="ordered locus">OB1641</name>
</gene>
<evidence type="ECO:0000255" key="1">
    <source>
        <dbReference type="PROSITE-ProRule" id="PRU00112"/>
    </source>
</evidence>
<evidence type="ECO:0000255" key="2">
    <source>
        <dbReference type="PROSITE-ProRule" id="PRU00169"/>
    </source>
</evidence>
<evidence type="ECO:0000305" key="3"/>
<comment type="function">
    <text>Member of the two-component regulatory system LytS/LytT that probably regulates genes involved in cell wall metabolism.</text>
</comment>
<comment type="subcellular location">
    <subcellularLocation>
        <location evidence="3">Cytoplasm</location>
    </subcellularLocation>
</comment>
<comment type="PTM">
    <text evidence="3">Phosphorylated by LytS.</text>
</comment>
<keyword id="KW-0963">Cytoplasm</keyword>
<keyword id="KW-0238">DNA-binding</keyword>
<keyword id="KW-0597">Phosphoprotein</keyword>
<keyword id="KW-1185">Reference proteome</keyword>
<keyword id="KW-0804">Transcription</keyword>
<keyword id="KW-0805">Transcription regulation</keyword>
<keyword id="KW-0902">Two-component regulatory system</keyword>
<reference key="1">
    <citation type="journal article" date="2002" name="Nucleic Acids Res.">
        <title>Genome sequence of Oceanobacillus iheyensis isolated from the Iheya Ridge and its unexpected adaptive capabilities to extreme environments.</title>
        <authorList>
            <person name="Takami H."/>
            <person name="Takaki Y."/>
            <person name="Uchiyama I."/>
        </authorList>
    </citation>
    <scope>NUCLEOTIDE SEQUENCE [LARGE SCALE GENOMIC DNA]</scope>
    <source>
        <strain>DSM 14371 / CIP 107618 / JCM 11309 / KCTC 3954 / HTE831</strain>
    </source>
</reference>
<accession>Q8EQQ3</accession>
<dbReference type="EMBL" id="BA000028">
    <property type="protein sequence ID" value="BAC13597.1"/>
    <property type="molecule type" value="Genomic_DNA"/>
</dbReference>
<dbReference type="RefSeq" id="WP_011066041.1">
    <property type="nucleotide sequence ID" value="NC_004193.1"/>
</dbReference>
<dbReference type="SMR" id="Q8EQQ3"/>
<dbReference type="STRING" id="221109.gene:10733881"/>
<dbReference type="KEGG" id="oih:OB1641"/>
<dbReference type="eggNOG" id="COG3279">
    <property type="taxonomic scope" value="Bacteria"/>
</dbReference>
<dbReference type="HOGENOM" id="CLU_000445_14_1_9"/>
<dbReference type="OrthoDB" id="9809318at2"/>
<dbReference type="PhylomeDB" id="Q8EQQ3"/>
<dbReference type="Proteomes" id="UP000000822">
    <property type="component" value="Chromosome"/>
</dbReference>
<dbReference type="GO" id="GO:0005737">
    <property type="term" value="C:cytoplasm"/>
    <property type="evidence" value="ECO:0007669"/>
    <property type="project" value="UniProtKB-SubCell"/>
</dbReference>
<dbReference type="GO" id="GO:0003677">
    <property type="term" value="F:DNA binding"/>
    <property type="evidence" value="ECO:0007669"/>
    <property type="project" value="UniProtKB-KW"/>
</dbReference>
<dbReference type="GO" id="GO:0000156">
    <property type="term" value="F:phosphorelay response regulator activity"/>
    <property type="evidence" value="ECO:0007669"/>
    <property type="project" value="InterPro"/>
</dbReference>
<dbReference type="CDD" id="cd17532">
    <property type="entry name" value="REC_LytTR_AlgR-like"/>
    <property type="match status" value="1"/>
</dbReference>
<dbReference type="Gene3D" id="2.20.25.10">
    <property type="match status" value="1"/>
</dbReference>
<dbReference type="Gene3D" id="2.40.50.40">
    <property type="match status" value="1"/>
</dbReference>
<dbReference type="Gene3D" id="3.40.50.2300">
    <property type="match status" value="1"/>
</dbReference>
<dbReference type="InterPro" id="IPR011006">
    <property type="entry name" value="CheY-like_superfamily"/>
</dbReference>
<dbReference type="InterPro" id="IPR046947">
    <property type="entry name" value="LytR-like"/>
</dbReference>
<dbReference type="InterPro" id="IPR007492">
    <property type="entry name" value="LytTR_DNA-bd_dom"/>
</dbReference>
<dbReference type="InterPro" id="IPR001789">
    <property type="entry name" value="Sig_transdc_resp-reg_receiver"/>
</dbReference>
<dbReference type="PANTHER" id="PTHR37299:SF1">
    <property type="entry name" value="STAGE 0 SPORULATION PROTEIN A HOMOLOG"/>
    <property type="match status" value="1"/>
</dbReference>
<dbReference type="PANTHER" id="PTHR37299">
    <property type="entry name" value="TRANSCRIPTIONAL REGULATOR-RELATED"/>
    <property type="match status" value="1"/>
</dbReference>
<dbReference type="Pfam" id="PF04397">
    <property type="entry name" value="LytTR"/>
    <property type="match status" value="1"/>
</dbReference>
<dbReference type="Pfam" id="PF00072">
    <property type="entry name" value="Response_reg"/>
    <property type="match status" value="1"/>
</dbReference>
<dbReference type="SMART" id="SM00850">
    <property type="entry name" value="LytTR"/>
    <property type="match status" value="1"/>
</dbReference>
<dbReference type="SMART" id="SM00448">
    <property type="entry name" value="REC"/>
    <property type="match status" value="1"/>
</dbReference>
<dbReference type="SUPFAM" id="SSF52172">
    <property type="entry name" value="CheY-like"/>
    <property type="match status" value="1"/>
</dbReference>
<dbReference type="PROSITE" id="PS50930">
    <property type="entry name" value="HTH_LYTTR"/>
    <property type="match status" value="1"/>
</dbReference>
<dbReference type="PROSITE" id="PS50110">
    <property type="entry name" value="RESPONSE_REGULATORY"/>
    <property type="match status" value="1"/>
</dbReference>
<organism>
    <name type="scientific">Oceanobacillus iheyensis (strain DSM 14371 / CIP 107618 / JCM 11309 / KCTC 3954 / HTE831)</name>
    <dbReference type="NCBI Taxonomy" id="221109"/>
    <lineage>
        <taxon>Bacteria</taxon>
        <taxon>Bacillati</taxon>
        <taxon>Bacillota</taxon>
        <taxon>Bacilli</taxon>
        <taxon>Bacillales</taxon>
        <taxon>Bacillaceae</taxon>
        <taxon>Oceanobacillus</taxon>
    </lineage>
</organism>
<protein>
    <recommendedName>
        <fullName>Sensory transduction protein LytT</fullName>
    </recommendedName>
</protein>
<proteinExistence type="inferred from homology"/>
<sequence length="246" mass="28511">MKIHIMIAEDERLAREELMYLLQQENDIILCPSAENGDQLLNLYQEYNPNVIFLDIHMPGINGIEVAKKIRNEFEDKDIIIIFTTAYESYGVQAFEIQATDYLLKPFSEERFKIAMNRIRKTLSTKKVRKPKVDKLVVNLDEKMMVIDPNQIGFAAREGRTVKIHFISNEVIETKMNLKELEEKLSGFPFYRPHRSYLVNMDCIKEITPWFNGAYNLVIKDLAESTIPVSRTAAKGLFDALQGVHH</sequence>
<feature type="chain" id="PRO_0000081125" description="Sensory transduction protein LytT">
    <location>
        <begin position="1"/>
        <end position="246"/>
    </location>
</feature>
<feature type="domain" description="Response regulatory" evidence="2">
    <location>
        <begin position="4"/>
        <end position="120"/>
    </location>
</feature>
<feature type="domain" description="HTH LytTR-type" evidence="1">
    <location>
        <begin position="136"/>
        <end position="243"/>
    </location>
</feature>
<feature type="modified residue" description="4-aspartylphosphate" evidence="2">
    <location>
        <position position="55"/>
    </location>
</feature>